<comment type="function">
    <text evidence="3 4 6">Receptor that signals constitutively via several signaling pathways including PI3K/AKT as well as mitogen- and stress-activated/MAP kinases. Promotes host cell proliferation and survival, modulates cell migration, stimulates angiogenesis, and recruits inflammatory cells, both in expressing cells and in neighboring cells. Maintains chronic activation of NF-kappa-B via interaction with host CADM1 (PubMed:29698475).</text>
</comment>
<comment type="subunit">
    <text evidence="5 6">Interacts with protein K7; this interaction promotes vGPCR proteasomal degradation (PubMed:18802460). Interacts with host CADM1; this interaction is essential for chronic NF-kappa-B activation (PubMed:29698475).</text>
</comment>
<comment type="interaction">
    <interactant intactId="EBI-7930093">
        <id>Q98146</id>
    </interactant>
    <interactant intactId="EBI-9002986">
        <id>F5HDA4</id>
        <label>K7</label>
    </interactant>
    <organismsDiffer>false</organismsDiffer>
    <experiments>5</experiments>
</comment>
<comment type="subcellular location">
    <subcellularLocation>
        <location>Host cell membrane</location>
        <topology>Multi-pass membrane protein</topology>
    </subcellularLocation>
</comment>
<comment type="similarity">
    <text evidence="2">Belongs to the G-protein coupled receptor 1 family.</text>
</comment>
<reference key="1">
    <citation type="journal article" date="1996" name="J. Virol.">
        <title>Kaposi's sarcoma-associated herpesvirus contains G protein-coupled receptor and cyclin D homologs which are expressed in Kaposi's sarcoma and malignant lymphoma.</title>
        <authorList>
            <person name="Cesarman E."/>
            <person name="Nador R.G."/>
            <person name="Bai F."/>
            <person name="Bohenzky R.A."/>
            <person name="Russo J.J."/>
            <person name="Moore P.S."/>
            <person name="Chang Y."/>
            <person name="Knowles D.M."/>
        </authorList>
    </citation>
    <scope>NUCLEOTIDE SEQUENCE [GENOMIC DNA]</scope>
</reference>
<reference key="2">
    <citation type="submission" date="1999-01" db="EMBL/GenBank/DDBJ databases">
        <authorList>
            <person name="Cesarman E."/>
            <person name="Nador R.G."/>
            <person name="Bai F."/>
            <person name="Chang J."/>
            <person name="Moore P.S."/>
            <person name="Knowles D.M."/>
        </authorList>
    </citation>
    <scope>SEQUENCE REVISION</scope>
</reference>
<reference key="3">
    <citation type="submission" date="1997-01" db="EMBL/GenBank/DDBJ databases">
        <authorList>
            <person name="Guo H.G."/>
            <person name="Browning P."/>
            <person name="Nicholas J."/>
            <person name="Hayward G.H."/>
            <person name="Tschachler E."/>
            <person name="Jiang Y.W."/>
            <person name="Sadowska M."/>
            <person name="Raffeld M."/>
            <person name="Colombini S."/>
            <person name="Gallo R.C."/>
            <person name="Reitz M.S."/>
        </authorList>
    </citation>
    <scope>NUCLEOTIDE SEQUENCE [GENOMIC DNA]</scope>
</reference>
<reference key="4">
    <citation type="journal article" date="1996" name="Proc. Natl. Acad. Sci. U.S.A.">
        <title>Nucleotide sequence of the Kaposi sarcoma-associated herpesvirus (HHV8).</title>
        <authorList>
            <person name="Russo J.J."/>
            <person name="Bohenzky R.A."/>
            <person name="Chien M.-C."/>
            <person name="Chen J."/>
            <person name="Yan M."/>
            <person name="Maddalena D."/>
            <person name="Parry J.P."/>
            <person name="Peruzzi D."/>
            <person name="Edelman I.S."/>
            <person name="Chang Y."/>
            <person name="Moore P.S."/>
        </authorList>
    </citation>
    <scope>NUCLEOTIDE SEQUENCE [LARGE SCALE GENOMIC DNA]</scope>
</reference>
<reference key="5">
    <citation type="journal article" date="1997" name="J. Virol.">
        <title>Cell-homologous genes in the Kaposi's sarcoma-associated rhadinovirus human herpesvirus 8: determinants of its pathogenicity?</title>
        <authorList>
            <person name="Neipel F."/>
            <person name="Albrecht J.-C."/>
            <person name="Fleckenstein B."/>
        </authorList>
    </citation>
    <scope>NUCLEOTIDE SEQUENCE [LARGE SCALE GENOMIC DNA]</scope>
</reference>
<reference key="6">
    <citation type="journal article" date="2006" name="J. Gen. Virol.">
        <title>Kaposi's sarcoma-associated herpesvirus immune modulation: an overview.</title>
        <authorList>
            <person name="Rezaee S.A.R."/>
            <person name="Cunningham C."/>
            <person name="Davison A.J."/>
            <person name="Blackbourn D.J."/>
        </authorList>
    </citation>
    <scope>NUCLEOTIDE SEQUENCE [LARGE SCALE GENOMIC DNA]</scope>
</reference>
<reference key="7">
    <citation type="journal article" date="2003" name="J. Virol.">
        <title>The Kaposi's sarcoma-associated herpesvirus G protein-coupled receptor has broad signaling effects in primary effusion lymphoma cells.</title>
        <authorList>
            <person name="Cannon M."/>
            <person name="Philpott N.J."/>
            <person name="Cesarman E."/>
        </authorList>
    </citation>
    <scope>FUNCTION</scope>
</reference>
<reference key="8">
    <citation type="journal article" date="2004" name="Oncogene">
        <title>The KSHV G protein-coupled receptor signals via multiple pathways to induce transcription factor activation in primary effusion lymphoma cells.</title>
        <authorList>
            <person name="Cannon M.L."/>
            <person name="Cesarman E."/>
        </authorList>
    </citation>
    <scope>FUNCTION</scope>
</reference>
<reference key="9">
    <citation type="journal article" date="2008" name="PLoS Pathog.">
        <title>Kaposi's sarcoma-associated herpesvirus K7 induces viral G protein-coupled receptor degradation and reduces its tumorigenicity.</title>
        <authorList>
            <person name="Feng H."/>
            <person name="Dong X."/>
            <person name="Negaard A."/>
            <person name="Feng P."/>
        </authorList>
    </citation>
    <scope>INTERACTION WITH PROTEIN K7</scope>
</reference>
<reference key="10">
    <citation type="journal article" date="2018" name="PLoS Pathog.">
        <title>CADM1 is essential for KSHV-encoded vGPCR-and vFLIP-mediated chronic NF-kappaB activation.</title>
        <authorList>
            <person name="Hunte R."/>
            <person name="Alonso P."/>
            <person name="Thomas R."/>
            <person name="Bazile C.A."/>
            <person name="Ramos J.C."/>
            <person name="van der Weyden L."/>
            <person name="Dominguez-Bendala J."/>
            <person name="Khan W.N."/>
            <person name="Shembade N."/>
        </authorList>
    </citation>
    <scope>FUNCTION</scope>
    <scope>INTERACTION WITH HOST CADM1</scope>
</reference>
<organism>
    <name type="scientific">Human herpesvirus 8 type P (isolate GK18)</name>
    <name type="common">HHV-8</name>
    <name type="synonym">Kaposi's sarcoma-associated herpesvirus</name>
    <dbReference type="NCBI Taxonomy" id="868565"/>
    <lineage>
        <taxon>Viruses</taxon>
        <taxon>Duplodnaviria</taxon>
        <taxon>Heunggongvirae</taxon>
        <taxon>Peploviricota</taxon>
        <taxon>Herviviricetes</taxon>
        <taxon>Herpesvirales</taxon>
        <taxon>Orthoherpesviridae</taxon>
        <taxon>Gammaherpesvirinae</taxon>
        <taxon>Rhadinovirus</taxon>
        <taxon>Rhadinovirus humangamma8</taxon>
        <taxon>Human herpesvirus 8</taxon>
    </lineage>
</organism>
<keyword id="KW-0002">3D-structure</keyword>
<keyword id="KW-0297">G-protein coupled receptor</keyword>
<keyword id="KW-0325">Glycoprotein</keyword>
<keyword id="KW-1032">Host cell membrane</keyword>
<keyword id="KW-1043">Host membrane</keyword>
<keyword id="KW-0472">Membrane</keyword>
<keyword id="KW-0675">Receptor</keyword>
<keyword id="KW-1185">Reference proteome</keyword>
<keyword id="KW-0807">Transducer</keyword>
<keyword id="KW-0812">Transmembrane</keyword>
<keyword id="KW-1133">Transmembrane helix</keyword>
<organismHost>
    <name type="scientific">Homo sapiens</name>
    <name type="common">Human</name>
    <dbReference type="NCBI Taxonomy" id="9606"/>
</organismHost>
<feature type="chain" id="PRO_0000070252" description="viral G-protein coupled receptor">
    <location>
        <begin position="1"/>
        <end position="342"/>
    </location>
</feature>
<feature type="topological domain" description="Extracellular" evidence="1">
    <location>
        <begin position="1"/>
        <end position="51"/>
    </location>
</feature>
<feature type="transmembrane region" description="Helical; Name=1" evidence="1">
    <location>
        <begin position="52"/>
        <end position="72"/>
    </location>
</feature>
<feature type="topological domain" description="Cytoplasmic" evidence="1">
    <location>
        <begin position="73"/>
        <end position="92"/>
    </location>
</feature>
<feature type="transmembrane region" description="Helical; Name=2" evidence="1">
    <location>
        <begin position="93"/>
        <end position="113"/>
    </location>
</feature>
<feature type="topological domain" description="Extracellular" evidence="1">
    <location>
        <begin position="114"/>
        <end position="121"/>
    </location>
</feature>
<feature type="transmembrane region" description="Helical; Name=3" evidence="1">
    <location>
        <begin position="122"/>
        <end position="142"/>
    </location>
</feature>
<feature type="topological domain" description="Cytoplasmic" evidence="1">
    <location>
        <begin position="143"/>
        <end position="159"/>
    </location>
</feature>
<feature type="transmembrane region" description="Helical; Name=4" evidence="1">
    <location>
        <begin position="160"/>
        <end position="180"/>
    </location>
</feature>
<feature type="topological domain" description="Extracellular" evidence="1">
    <location>
        <begin position="181"/>
        <end position="217"/>
    </location>
</feature>
<feature type="transmembrane region" description="Helical; Name=5" evidence="1">
    <location>
        <begin position="218"/>
        <end position="238"/>
    </location>
</feature>
<feature type="topological domain" description="Cytoplasmic" evidence="1">
    <location>
        <begin position="239"/>
        <end position="251"/>
    </location>
</feature>
<feature type="transmembrane region" description="Helical; Name=6" evidence="1">
    <location>
        <begin position="252"/>
        <end position="272"/>
    </location>
</feature>
<feature type="topological domain" description="Extracellular" evidence="1">
    <location>
        <begin position="273"/>
        <end position="293"/>
    </location>
</feature>
<feature type="transmembrane region" description="Helical; Name=7" evidence="1">
    <location>
        <begin position="294"/>
        <end position="314"/>
    </location>
</feature>
<feature type="topological domain" description="Cytoplasmic" evidence="1">
    <location>
        <begin position="315"/>
        <end position="342"/>
    </location>
</feature>
<feature type="glycosylation site" description="N-linked (GlcNAc...) asparagine; by host" evidence="1">
    <location>
        <position position="18"/>
    </location>
</feature>
<feature type="glycosylation site" description="N-linked (GlcNAc...) asparagine; by host" evidence="1">
    <location>
        <position position="22"/>
    </location>
</feature>
<feature type="glycosylation site" description="N-linked (GlcNAc...) asparagine; by host" evidence="1">
    <location>
        <position position="31"/>
    </location>
</feature>
<feature type="sequence conflict" description="In Ref. 2; AAD04749." evidence="7" ref="2">
    <original>V</original>
    <variation>G</variation>
    <location>
        <position position="44"/>
    </location>
</feature>
<feature type="sequence conflict" description="In Ref. 2; AAD04749." evidence="7" ref="2">
    <original>A</original>
    <variation>P</variation>
    <location>
        <position position="167"/>
    </location>
</feature>
<feature type="sequence conflict" description="In Ref. 3; AAB51506." evidence="7" ref="3">
    <original>L</original>
    <variation>S</variation>
    <location>
        <position position="170"/>
    </location>
</feature>
<feature type="sequence conflict" description="In Ref. 3; AAB51506." evidence="7" ref="3">
    <original>R</original>
    <variation>K</variation>
    <location>
        <position position="322"/>
    </location>
</feature>
<name>VGPCR_HHV8P</name>
<gene>
    <name type="primary">ORF74</name>
</gene>
<protein>
    <recommendedName>
        <fullName>viral G-protein coupled receptor</fullName>
        <shortName>vGPCR</shortName>
    </recommendedName>
    <alternativeName>
        <fullName>Protein ORF74</fullName>
    </alternativeName>
</protein>
<evidence type="ECO:0000255" key="1"/>
<evidence type="ECO:0000255" key="2">
    <source>
        <dbReference type="PROSITE-ProRule" id="PRU00521"/>
    </source>
</evidence>
<evidence type="ECO:0000269" key="3">
    <source>
    </source>
</evidence>
<evidence type="ECO:0000269" key="4">
    <source>
    </source>
</evidence>
<evidence type="ECO:0000269" key="5">
    <source>
    </source>
</evidence>
<evidence type="ECO:0000269" key="6">
    <source>
    </source>
</evidence>
<evidence type="ECO:0000305" key="7"/>
<sequence length="342" mass="38669">MAAEDFLTIFLDDDESWNETLNMSGYDYSGNFSLEVSVCEMTTVVPYTWNVGILSLIFLINVLGNGLVTYIFCKHRSRAGAIDILLLGICLNSLCLSISLLAEVLMFLFPNIISTGLCRLEIFFYYLYVYLDIFSVVCVSLVRYLLVAYSTRSWPKKQSLGWVLTSAALLIALVLSGDACRHRSRVVDPVSKQAMCYENAGNMTADWRLHVRTVSVTAGFLLPLALLILFYALTWCVVRRTKLQARRKVRGVIVAVVLLFFVFCFPYHVLNLLDTLLRRRWIRDSCYTRGLINVGLAVTSLLQALYSAVVPLIYSCLGSLFRQRMYGLFQSLRQSFMSGATT</sequence>
<accession>Q98146</accession>
<accession>O12573</accession>
<accession>P88966</accession>
<accession>Q77Q35</accession>
<dbReference type="EMBL" id="U82242">
    <property type="protein sequence ID" value="AAB51506.1"/>
    <property type="molecule type" value="Genomic_DNA"/>
</dbReference>
<dbReference type="EMBL" id="U75698">
    <property type="protein sequence ID" value="AAC57160.1"/>
    <property type="molecule type" value="Genomic_DNA"/>
</dbReference>
<dbReference type="EMBL" id="U40394">
    <property type="protein sequence ID" value="AAD04749.1"/>
    <property type="molecule type" value="Genomic_DNA"/>
</dbReference>
<dbReference type="EMBL" id="U93872">
    <property type="protein sequence ID" value="AAB62618.1"/>
    <property type="molecule type" value="Genomic_DNA"/>
</dbReference>
<dbReference type="EMBL" id="AF148805">
    <property type="protein sequence ID" value="AAD46503.1"/>
    <property type="molecule type" value="Genomic_DNA"/>
</dbReference>
<dbReference type="RefSeq" id="YP_001129433.1">
    <property type="nucleotide sequence ID" value="NC_009333.1"/>
</dbReference>
<dbReference type="PDB" id="8K4O">
    <property type="method" value="EM"/>
    <property type="resolution" value="3.01 A"/>
    <property type="chains" value="E=5-337"/>
</dbReference>
<dbReference type="PDB" id="8K4P">
    <property type="method" value="EM"/>
    <property type="resolution" value="2.81 A"/>
    <property type="chains" value="A=47-340"/>
</dbReference>
<dbReference type="PDBsum" id="8K4O"/>
<dbReference type="PDBsum" id="8K4P"/>
<dbReference type="SMR" id="Q98146"/>
<dbReference type="BioGRID" id="1776968">
    <property type="interactions" value="21"/>
</dbReference>
<dbReference type="IntAct" id="Q98146">
    <property type="interactions" value="3"/>
</dbReference>
<dbReference type="MINT" id="Q98146"/>
<dbReference type="GlyCosmos" id="Q98146">
    <property type="glycosylation" value="3 sites, No reported glycans"/>
</dbReference>
<dbReference type="KEGG" id="vg:4961460"/>
<dbReference type="Proteomes" id="UP000000942">
    <property type="component" value="Segment"/>
</dbReference>
<dbReference type="GO" id="GO:0020002">
    <property type="term" value="C:host cell plasma membrane"/>
    <property type="evidence" value="ECO:0007669"/>
    <property type="project" value="UniProtKB-SubCell"/>
</dbReference>
<dbReference type="GO" id="GO:0016020">
    <property type="term" value="C:membrane"/>
    <property type="evidence" value="ECO:0007669"/>
    <property type="project" value="UniProtKB-KW"/>
</dbReference>
<dbReference type="GO" id="GO:0019957">
    <property type="term" value="F:C-C chemokine binding"/>
    <property type="evidence" value="ECO:0007669"/>
    <property type="project" value="TreeGrafter"/>
</dbReference>
<dbReference type="GO" id="GO:0016493">
    <property type="term" value="F:C-C chemokine receptor activity"/>
    <property type="evidence" value="ECO:0007669"/>
    <property type="project" value="TreeGrafter"/>
</dbReference>
<dbReference type="GO" id="GO:0019722">
    <property type="term" value="P:calcium-mediated signaling"/>
    <property type="evidence" value="ECO:0007669"/>
    <property type="project" value="TreeGrafter"/>
</dbReference>
<dbReference type="GO" id="GO:0060326">
    <property type="term" value="P:cell chemotaxis"/>
    <property type="evidence" value="ECO:0007669"/>
    <property type="project" value="TreeGrafter"/>
</dbReference>
<dbReference type="GO" id="GO:0006955">
    <property type="term" value="P:immune response"/>
    <property type="evidence" value="ECO:0007669"/>
    <property type="project" value="TreeGrafter"/>
</dbReference>
<dbReference type="GO" id="GO:0007204">
    <property type="term" value="P:positive regulation of cytosolic calcium ion concentration"/>
    <property type="evidence" value="ECO:0007669"/>
    <property type="project" value="TreeGrafter"/>
</dbReference>
<dbReference type="Gene3D" id="1.20.1070.10">
    <property type="entry name" value="Rhodopsin 7-helix transmembrane proteins"/>
    <property type="match status" value="1"/>
</dbReference>
<dbReference type="InterPro" id="IPR050119">
    <property type="entry name" value="CCR1-9-like"/>
</dbReference>
<dbReference type="InterPro" id="IPR000276">
    <property type="entry name" value="GPCR_Rhodpsn"/>
</dbReference>
<dbReference type="InterPro" id="IPR017452">
    <property type="entry name" value="GPCR_Rhodpsn_7TM"/>
</dbReference>
<dbReference type="PANTHER" id="PTHR10489">
    <property type="entry name" value="CELL ADHESION MOLECULE"/>
    <property type="match status" value="1"/>
</dbReference>
<dbReference type="PANTHER" id="PTHR10489:SF932">
    <property type="entry name" value="G-PROTEIN COUPLED RECEPTORS FAMILY 1 PROFILE DOMAIN-CONTAINING PROTEIN"/>
    <property type="match status" value="1"/>
</dbReference>
<dbReference type="Pfam" id="PF00001">
    <property type="entry name" value="7tm_1"/>
    <property type="match status" value="1"/>
</dbReference>
<dbReference type="PRINTS" id="PR00237">
    <property type="entry name" value="GPCRRHODOPSN"/>
</dbReference>
<dbReference type="SUPFAM" id="SSF81321">
    <property type="entry name" value="Family A G protein-coupled receptor-like"/>
    <property type="match status" value="1"/>
</dbReference>
<dbReference type="PROSITE" id="PS50262">
    <property type="entry name" value="G_PROTEIN_RECEP_F1_2"/>
    <property type="match status" value="1"/>
</dbReference>
<proteinExistence type="evidence at protein level"/>